<comment type="function">
    <text>May play a central role in the functions mediated by specific classes of synaptic vesicles.</text>
</comment>
<comment type="subcellular location">
    <subcellularLocation>
        <location>Cytoplasmic vesicle</location>
        <location>Secretory vesicle</location>
        <location>Synaptic vesicle membrane</location>
    </subcellularLocation>
</comment>
<comment type="tissue specificity">
    <text>Cholinergic synaptic vesicles.</text>
</comment>
<comment type="miscellaneous">
    <text>Synthesized in the neuronal cell bodies and transported to the terminals. Each vesicle contains approximately 28 molecules of VAT-1.</text>
</comment>
<comment type="similarity">
    <text evidence="2">Belongs to the zinc-containing alcohol dehydrogenase family. Quinone oxidoreductase subfamily.</text>
</comment>
<reference key="1">
    <citation type="journal article" date="1989" name="Neuron">
        <title>VAT-1: an abundant membrane protein from Torpedo cholinergic synaptic vesicles.</title>
        <authorList>
            <person name="Linial M."/>
            <person name="Miller K."/>
            <person name="Scheller R.H."/>
        </authorList>
    </citation>
    <scope>NUCLEOTIDE SEQUENCE</scope>
    <scope>PARTIAL PROTEIN SEQUENCE</scope>
    <source>
        <tissue>Electric lobe</tissue>
    </source>
</reference>
<organism>
    <name type="scientific">Tetronarce californica</name>
    <name type="common">Pacific electric ray</name>
    <name type="synonym">Torpedo californica</name>
    <dbReference type="NCBI Taxonomy" id="7787"/>
    <lineage>
        <taxon>Eukaryota</taxon>
        <taxon>Metazoa</taxon>
        <taxon>Chordata</taxon>
        <taxon>Craniata</taxon>
        <taxon>Vertebrata</taxon>
        <taxon>Chondrichthyes</taxon>
        <taxon>Elasmobranchii</taxon>
        <taxon>Batoidea</taxon>
        <taxon>Torpediniformes</taxon>
        <taxon>Torpedinidae</taxon>
        <taxon>Tetronarce</taxon>
    </lineage>
</organism>
<dbReference type="EC" id="1.-.-.-"/>
<dbReference type="PIR" id="JN0013">
    <property type="entry name" value="JN0013"/>
</dbReference>
<dbReference type="SMR" id="P19333"/>
<dbReference type="GO" id="GO:0005741">
    <property type="term" value="C:mitochondrial outer membrane"/>
    <property type="evidence" value="ECO:0007669"/>
    <property type="project" value="TreeGrafter"/>
</dbReference>
<dbReference type="GO" id="GO:0030672">
    <property type="term" value="C:synaptic vesicle membrane"/>
    <property type="evidence" value="ECO:0007669"/>
    <property type="project" value="UniProtKB-SubCell"/>
</dbReference>
<dbReference type="GO" id="GO:0016491">
    <property type="term" value="F:oxidoreductase activity"/>
    <property type="evidence" value="ECO:0007669"/>
    <property type="project" value="UniProtKB-KW"/>
</dbReference>
<dbReference type="GO" id="GO:0008270">
    <property type="term" value="F:zinc ion binding"/>
    <property type="evidence" value="ECO:0007669"/>
    <property type="project" value="InterPro"/>
</dbReference>
<dbReference type="GO" id="GO:0010637">
    <property type="term" value="P:negative regulation of mitochondrial fusion"/>
    <property type="evidence" value="ECO:0007669"/>
    <property type="project" value="TreeGrafter"/>
</dbReference>
<dbReference type="CDD" id="cd08275">
    <property type="entry name" value="MDR3"/>
    <property type="match status" value="1"/>
</dbReference>
<dbReference type="Gene3D" id="3.90.180.10">
    <property type="entry name" value="Medium-chain alcohol dehydrogenases, catalytic domain"/>
    <property type="match status" value="1"/>
</dbReference>
<dbReference type="Gene3D" id="3.40.50.720">
    <property type="entry name" value="NAD(P)-binding Rossmann-like Domain"/>
    <property type="match status" value="1"/>
</dbReference>
<dbReference type="InterPro" id="IPR013154">
    <property type="entry name" value="ADH-like_N"/>
</dbReference>
<dbReference type="InterPro" id="IPR011032">
    <property type="entry name" value="GroES-like_sf"/>
</dbReference>
<dbReference type="InterPro" id="IPR036291">
    <property type="entry name" value="NAD(P)-bd_dom_sf"/>
</dbReference>
<dbReference type="InterPro" id="IPR020843">
    <property type="entry name" value="PKS_ER"/>
</dbReference>
<dbReference type="InterPro" id="IPR002364">
    <property type="entry name" value="Quin_OxRdtase/zeta-crystal_CS"/>
</dbReference>
<dbReference type="InterPro" id="IPR052100">
    <property type="entry name" value="SV-ATPase_mito-regulator"/>
</dbReference>
<dbReference type="PANTHER" id="PTHR44054:SF1">
    <property type="entry name" value="SYNAPTIC VESICLE MEMBRANE PROTEIN VAT-1 HOMOLOG"/>
    <property type="match status" value="1"/>
</dbReference>
<dbReference type="PANTHER" id="PTHR44054">
    <property type="entry name" value="SYNAPTIC VESICLE MEMBRANE PROTEIN VAT-1 HOMOLOG-LIKE"/>
    <property type="match status" value="1"/>
</dbReference>
<dbReference type="Pfam" id="PF08240">
    <property type="entry name" value="ADH_N"/>
    <property type="match status" value="1"/>
</dbReference>
<dbReference type="Pfam" id="PF13602">
    <property type="entry name" value="ADH_zinc_N_2"/>
    <property type="match status" value="1"/>
</dbReference>
<dbReference type="SMART" id="SM00829">
    <property type="entry name" value="PKS_ER"/>
    <property type="match status" value="1"/>
</dbReference>
<dbReference type="SUPFAM" id="SSF50129">
    <property type="entry name" value="GroES-like"/>
    <property type="match status" value="1"/>
</dbReference>
<dbReference type="SUPFAM" id="SSF51735">
    <property type="entry name" value="NAD(P)-binding Rossmann-fold domains"/>
    <property type="match status" value="1"/>
</dbReference>
<dbReference type="PROSITE" id="PS01162">
    <property type="entry name" value="QOR_ZETA_CRYSTAL"/>
    <property type="match status" value="1"/>
</dbReference>
<sequence>MTGEEVKEPKEQQEITEVKEQEPEISYNAIVLNGVGGYDKVKVEVKKGVPTLKSDEILVRVQACGLNFSDLLVRQGAFGKHHSLGTECAGVVEAIGDLVIDRKVGDKIIMLNIDGGLWTELVVTTVNRTFLMPDGMSFQEAAAISVNYTAAYVMIYDFANLRPSQSILIHMAAGGVGIAATQLCKLVHDVTIFGTASPSKHETIKENGVTYPIDYTTLDYAEEVRKIAPKGVDIVLDPLGGADDSKGFGLLKPLGKLVLYGSANQVTAPKRSSLAAAKVWWHKFNIDALQLINSNKAVCGFHLGRTDPDHVAEVIRKLISLYKEGKIKPKVDSVWSFEQVGDAMRHMRNTRTLEKSSWSLKSRQLMPQLEIKSVSKRQG</sequence>
<evidence type="ECO:0000255" key="1"/>
<evidence type="ECO:0000305" key="2"/>
<protein>
    <recommendedName>
        <fullName>Synaptic vesicle membrane protein VAT-1</fullName>
        <ecNumber>1.-.-.-</ecNumber>
    </recommendedName>
</protein>
<feature type="chain" id="PRO_0000160921" description="Synaptic vesicle membrane protein VAT-1">
    <location>
        <begin position="1"/>
        <end position="379"/>
    </location>
</feature>
<feature type="modified residue" description="Phosphoserine" evidence="1">
    <location>
        <position position="273"/>
    </location>
</feature>
<keyword id="KW-0968">Cytoplasmic vesicle</keyword>
<keyword id="KW-0903">Direct protein sequencing</keyword>
<keyword id="KW-0472">Membrane</keyword>
<keyword id="KW-0560">Oxidoreductase</keyword>
<keyword id="KW-0597">Phosphoprotein</keyword>
<keyword id="KW-0770">Synapse</keyword>
<proteinExistence type="evidence at protein level"/>
<name>VAT1_TETCF</name>
<accession>P19333</accession>